<comment type="function">
    <text evidence="1">NDH-1 shuttles electrons from NADH, via FMN and iron-sulfur (Fe-S) centers, to quinones in the respiratory chain. The immediate electron acceptor for the enzyme in this species is believed to be ubiquinone. Couples the redox reaction to proton translocation (for every two electrons transferred, four hydrogen ions are translocated across the cytoplasmic membrane), and thus conserves the redox energy in a proton gradient.</text>
</comment>
<comment type="catalytic activity">
    <reaction evidence="1">
        <text>a quinone + NADH + 5 H(+)(in) = a quinol + NAD(+) + 4 H(+)(out)</text>
        <dbReference type="Rhea" id="RHEA:57888"/>
        <dbReference type="ChEBI" id="CHEBI:15378"/>
        <dbReference type="ChEBI" id="CHEBI:24646"/>
        <dbReference type="ChEBI" id="CHEBI:57540"/>
        <dbReference type="ChEBI" id="CHEBI:57945"/>
        <dbReference type="ChEBI" id="CHEBI:132124"/>
    </reaction>
</comment>
<comment type="cofactor">
    <cofactor evidence="1">
        <name>[4Fe-4S] cluster</name>
        <dbReference type="ChEBI" id="CHEBI:49883"/>
    </cofactor>
    <text evidence="1">Binds 2 [4Fe-4S] clusters per subunit.</text>
</comment>
<comment type="subunit">
    <text evidence="1">NDH-1 is composed of 13 different subunits. Subunits NuoA, H, J, K, L, M, N constitute the membrane sector of the complex.</text>
</comment>
<comment type="subcellular location">
    <subcellularLocation>
        <location evidence="1">Cell inner membrane</location>
        <topology evidence="1">Peripheral membrane protein</topology>
    </subcellularLocation>
</comment>
<comment type="similarity">
    <text evidence="1">Belongs to the complex I 23 kDa subunit family.</text>
</comment>
<organism>
    <name type="scientific">Yersinia pestis bv. Antiqua (strain Antiqua)</name>
    <dbReference type="NCBI Taxonomy" id="360102"/>
    <lineage>
        <taxon>Bacteria</taxon>
        <taxon>Pseudomonadati</taxon>
        <taxon>Pseudomonadota</taxon>
        <taxon>Gammaproteobacteria</taxon>
        <taxon>Enterobacterales</taxon>
        <taxon>Yersiniaceae</taxon>
        <taxon>Yersinia</taxon>
    </lineage>
</organism>
<proteinExistence type="inferred from homology"/>
<feature type="chain" id="PRO_0000298562" description="NADH-quinone oxidoreductase subunit I">
    <location>
        <begin position="1"/>
        <end position="180"/>
    </location>
</feature>
<feature type="domain" description="4Fe-4S ferredoxin-type 1" evidence="1">
    <location>
        <begin position="50"/>
        <end position="80"/>
    </location>
</feature>
<feature type="domain" description="4Fe-4S ferredoxin-type 2" evidence="1">
    <location>
        <begin position="90"/>
        <end position="119"/>
    </location>
</feature>
<feature type="binding site" evidence="1">
    <location>
        <position position="60"/>
    </location>
    <ligand>
        <name>[4Fe-4S] cluster</name>
        <dbReference type="ChEBI" id="CHEBI:49883"/>
        <label>1</label>
    </ligand>
</feature>
<feature type="binding site" evidence="1">
    <location>
        <position position="63"/>
    </location>
    <ligand>
        <name>[4Fe-4S] cluster</name>
        <dbReference type="ChEBI" id="CHEBI:49883"/>
        <label>1</label>
    </ligand>
</feature>
<feature type="binding site" evidence="1">
    <location>
        <position position="66"/>
    </location>
    <ligand>
        <name>[4Fe-4S] cluster</name>
        <dbReference type="ChEBI" id="CHEBI:49883"/>
        <label>1</label>
    </ligand>
</feature>
<feature type="binding site" evidence="1">
    <location>
        <position position="70"/>
    </location>
    <ligand>
        <name>[4Fe-4S] cluster</name>
        <dbReference type="ChEBI" id="CHEBI:49883"/>
        <label>2</label>
    </ligand>
</feature>
<feature type="binding site" evidence="1">
    <location>
        <position position="99"/>
    </location>
    <ligand>
        <name>[4Fe-4S] cluster</name>
        <dbReference type="ChEBI" id="CHEBI:49883"/>
        <label>2</label>
    </ligand>
</feature>
<feature type="binding site" evidence="1">
    <location>
        <position position="102"/>
    </location>
    <ligand>
        <name>[4Fe-4S] cluster</name>
        <dbReference type="ChEBI" id="CHEBI:49883"/>
        <label>2</label>
    </ligand>
</feature>
<feature type="binding site" evidence="1">
    <location>
        <position position="105"/>
    </location>
    <ligand>
        <name>[4Fe-4S] cluster</name>
        <dbReference type="ChEBI" id="CHEBI:49883"/>
        <label>2</label>
    </ligand>
</feature>
<feature type="binding site" evidence="1">
    <location>
        <position position="109"/>
    </location>
    <ligand>
        <name>[4Fe-4S] cluster</name>
        <dbReference type="ChEBI" id="CHEBI:49883"/>
        <label>1</label>
    </ligand>
</feature>
<accession>Q1C6B6</accession>
<reference key="1">
    <citation type="journal article" date="2006" name="J. Bacteriol.">
        <title>Complete genome sequence of Yersinia pestis strains Antiqua and Nepal516: evidence of gene reduction in an emerging pathogen.</title>
        <authorList>
            <person name="Chain P.S.G."/>
            <person name="Hu P."/>
            <person name="Malfatti S.A."/>
            <person name="Radnedge L."/>
            <person name="Larimer F."/>
            <person name="Vergez L.M."/>
            <person name="Worsham P."/>
            <person name="Chu M.C."/>
            <person name="Andersen G.L."/>
        </authorList>
    </citation>
    <scope>NUCLEOTIDE SEQUENCE [LARGE SCALE GENOMIC DNA]</scope>
    <source>
        <strain>Antiqua</strain>
    </source>
</reference>
<protein>
    <recommendedName>
        <fullName evidence="1">NADH-quinone oxidoreductase subunit I</fullName>
        <ecNumber evidence="1">7.1.1.-</ecNumber>
    </recommendedName>
    <alternativeName>
        <fullName evidence="1">NADH dehydrogenase I subunit I</fullName>
    </alternativeName>
    <alternativeName>
        <fullName evidence="1">NDH-1 subunit I</fullName>
    </alternativeName>
</protein>
<dbReference type="EC" id="7.1.1.-" evidence="1"/>
<dbReference type="EMBL" id="CP000308">
    <property type="protein sequence ID" value="ABG14006.1"/>
    <property type="molecule type" value="Genomic_DNA"/>
</dbReference>
<dbReference type="RefSeq" id="WP_002210273.1">
    <property type="nucleotide sequence ID" value="NZ_CP009906.1"/>
</dbReference>
<dbReference type="SMR" id="Q1C6B6"/>
<dbReference type="GeneID" id="96666079"/>
<dbReference type="KEGG" id="ypa:YPA_2040"/>
<dbReference type="Proteomes" id="UP000001971">
    <property type="component" value="Chromosome"/>
</dbReference>
<dbReference type="GO" id="GO:0005886">
    <property type="term" value="C:plasma membrane"/>
    <property type="evidence" value="ECO:0007669"/>
    <property type="project" value="UniProtKB-SubCell"/>
</dbReference>
<dbReference type="GO" id="GO:0051539">
    <property type="term" value="F:4 iron, 4 sulfur cluster binding"/>
    <property type="evidence" value="ECO:0007669"/>
    <property type="project" value="UniProtKB-KW"/>
</dbReference>
<dbReference type="GO" id="GO:0005506">
    <property type="term" value="F:iron ion binding"/>
    <property type="evidence" value="ECO:0007669"/>
    <property type="project" value="UniProtKB-UniRule"/>
</dbReference>
<dbReference type="GO" id="GO:0050136">
    <property type="term" value="F:NADH:ubiquinone reductase (non-electrogenic) activity"/>
    <property type="evidence" value="ECO:0007669"/>
    <property type="project" value="UniProtKB-UniRule"/>
</dbReference>
<dbReference type="GO" id="GO:0048038">
    <property type="term" value="F:quinone binding"/>
    <property type="evidence" value="ECO:0007669"/>
    <property type="project" value="UniProtKB-KW"/>
</dbReference>
<dbReference type="GO" id="GO:0009060">
    <property type="term" value="P:aerobic respiration"/>
    <property type="evidence" value="ECO:0007669"/>
    <property type="project" value="TreeGrafter"/>
</dbReference>
<dbReference type="FunFam" id="3.30.70.3270:FF:000002">
    <property type="entry name" value="NADH-quinone oxidoreductase subunit I"/>
    <property type="match status" value="1"/>
</dbReference>
<dbReference type="Gene3D" id="3.30.70.3270">
    <property type="match status" value="1"/>
</dbReference>
<dbReference type="HAMAP" id="MF_01351">
    <property type="entry name" value="NDH1_NuoI"/>
    <property type="match status" value="1"/>
</dbReference>
<dbReference type="InterPro" id="IPR017896">
    <property type="entry name" value="4Fe4S_Fe-S-bd"/>
</dbReference>
<dbReference type="InterPro" id="IPR017900">
    <property type="entry name" value="4Fe4S_Fe_S_CS"/>
</dbReference>
<dbReference type="InterPro" id="IPR010226">
    <property type="entry name" value="NADH_quinone_OxRdtase_chainI"/>
</dbReference>
<dbReference type="NCBIfam" id="TIGR01971">
    <property type="entry name" value="NuoI"/>
    <property type="match status" value="1"/>
</dbReference>
<dbReference type="NCBIfam" id="NF004536">
    <property type="entry name" value="PRK05888.1-1"/>
    <property type="match status" value="1"/>
</dbReference>
<dbReference type="PANTHER" id="PTHR10849:SF20">
    <property type="entry name" value="NADH DEHYDROGENASE [UBIQUINONE] IRON-SULFUR PROTEIN 8, MITOCHONDRIAL"/>
    <property type="match status" value="1"/>
</dbReference>
<dbReference type="PANTHER" id="PTHR10849">
    <property type="entry name" value="NADH DEHYDROGENASE UBIQUINONE IRON-SULFUR PROTEIN 8, MITOCHONDRIAL"/>
    <property type="match status" value="1"/>
</dbReference>
<dbReference type="Pfam" id="PF12838">
    <property type="entry name" value="Fer4_7"/>
    <property type="match status" value="1"/>
</dbReference>
<dbReference type="SUPFAM" id="SSF54862">
    <property type="entry name" value="4Fe-4S ferredoxins"/>
    <property type="match status" value="1"/>
</dbReference>
<dbReference type="PROSITE" id="PS00198">
    <property type="entry name" value="4FE4S_FER_1"/>
    <property type="match status" value="2"/>
</dbReference>
<dbReference type="PROSITE" id="PS51379">
    <property type="entry name" value="4FE4S_FER_2"/>
    <property type="match status" value="2"/>
</dbReference>
<name>NUOI_YERPA</name>
<evidence type="ECO:0000255" key="1">
    <source>
        <dbReference type="HAMAP-Rule" id="MF_01351"/>
    </source>
</evidence>
<keyword id="KW-0004">4Fe-4S</keyword>
<keyword id="KW-0997">Cell inner membrane</keyword>
<keyword id="KW-1003">Cell membrane</keyword>
<keyword id="KW-0408">Iron</keyword>
<keyword id="KW-0411">Iron-sulfur</keyword>
<keyword id="KW-0472">Membrane</keyword>
<keyword id="KW-0479">Metal-binding</keyword>
<keyword id="KW-0520">NAD</keyword>
<keyword id="KW-0874">Quinone</keyword>
<keyword id="KW-0677">Repeat</keyword>
<keyword id="KW-1278">Translocase</keyword>
<keyword id="KW-0830">Ubiquinone</keyword>
<sequence>MTLKELVVGFGTQVRSLWMIGLHAFHKRETLMYPEEPVYLPPRYRGRIVLTRDPDGEERCVACNLCAVACPVGCISLQKAEQKDGRWYPEFFRINFSRCIFCGLCEEACPTTAIQLTPDFEMGEFKRQDLVYEKEDLLISGPGKYPEYNFYRMAGMAIDGKQKGEAENEAKPIDVKGLMP</sequence>
<gene>
    <name evidence="1" type="primary">nuoI</name>
    <name type="ordered locus">YPA_2040</name>
</gene>